<comment type="function">
    <text evidence="1">Core component of the SMC5-SMC6 complex, a complex involved in repair of DNA double-strand breaks by homologous recombination. The complex may promote sister chromatid homologous recombination by recruiting the SMC1-SMC3 cohesin complex to double-strand breaks. The complex is required for telomere maintenance via recombination and mediates sumoylation of shelterin complex (telosome) components (By similarity).</text>
</comment>
<comment type="subunit">
    <text evidence="1">Forms a heterodimer with smc5. Component of the SMC5-SMC6 complex which consists at least of smc5, smc6, nsmce2, nsmce1 and nsmce4a (By similarity).</text>
</comment>
<comment type="subcellular location">
    <subcellularLocation>
        <location>Nucleus</location>
    </subcellularLocation>
    <subcellularLocation>
        <location evidence="1">Chromosome</location>
    </subcellularLocation>
    <subcellularLocation>
        <location evidence="1">Chromosome</location>
        <location evidence="1">Telomere</location>
    </subcellularLocation>
    <text evidence="1">Associates with chromatin.</text>
</comment>
<comment type="domain">
    <text evidence="1">The flexible hinge domain, which separates the large intramolecular coiled coil regions, allows the heterotypic interaction with the corresponding domain of SMC5, forming a V-shaped heterodimer.</text>
</comment>
<comment type="similarity">
    <text evidence="4">Belongs to the SMC family. SMC6 subfamily.</text>
</comment>
<feature type="chain" id="PRO_0000270958" description="Structural maintenance of chromosomes protein 6">
    <location>
        <begin position="1"/>
        <end position="1090"/>
    </location>
</feature>
<feature type="region of interest" description="Disordered" evidence="3">
    <location>
        <begin position="1"/>
        <end position="44"/>
    </location>
</feature>
<feature type="region of interest" description="Flexible hinge">
    <location>
        <begin position="480"/>
        <end position="667"/>
    </location>
</feature>
<feature type="coiled-coil region" evidence="2">
    <location>
        <begin position="242"/>
        <end position="479"/>
    </location>
</feature>
<feature type="coiled-coil region" evidence="2">
    <location>
        <begin position="668"/>
        <end position="858"/>
    </location>
</feature>
<feature type="coiled-coil region" evidence="2">
    <location>
        <begin position="894"/>
        <end position="919"/>
    </location>
</feature>
<feature type="compositionally biased region" description="Basic and acidic residues" evidence="3">
    <location>
        <begin position="8"/>
        <end position="20"/>
    </location>
</feature>
<feature type="compositionally biased region" description="Acidic residues" evidence="3">
    <location>
        <begin position="21"/>
        <end position="34"/>
    </location>
</feature>
<feature type="binding site" evidence="2">
    <location>
        <begin position="83"/>
        <end position="90"/>
    </location>
    <ligand>
        <name>ATP</name>
        <dbReference type="ChEBI" id="CHEBI:30616"/>
    </ligand>
</feature>
<keyword id="KW-0067">ATP-binding</keyword>
<keyword id="KW-0158">Chromosome</keyword>
<keyword id="KW-0175">Coiled coil</keyword>
<keyword id="KW-0227">DNA damage</keyword>
<keyword id="KW-0233">DNA recombination</keyword>
<keyword id="KW-0234">DNA repair</keyword>
<keyword id="KW-0547">Nucleotide-binding</keyword>
<keyword id="KW-0539">Nucleus</keyword>
<keyword id="KW-1185">Reference proteome</keyword>
<keyword id="KW-0779">Telomere</keyword>
<sequence>MSKRKSISTHDKSTKRARPVEEEEDSEDADDRDQDVERLSPQVLPSGDVSDVGIVKSITLNNFMCHANLGPFAFGSNVNFIVGKNGSGKSAILTGLIVALGGNAQATNRGSSLKGFVKEGESFAVVSITLNNIGKDAYKPEVYGQAIVIDQKITREGIRTYKLKSQSGHIISTKKEDLVTILDYYNIQVNNPVTILTQEMSKYFLHSKGGAEKYKFFMKATQLEQMKDDFVHIKSTKSVTVDKVEQHSECLKDLKRDYLEKEDRYKSLASVNEMYTKLEELKKQMAWALVGEVEKEFEPMKEKLESDRCATNKFNEKVDEWKKKVEVAEGKQKQSHEQLEEITQQVSELQSKCTEFKTEVQRRNADLKSCEVTVHRHKAILRDLEKDKAQLSSKINDLSLSISQATGAESQARMERIAQIEAALEDLTHHTSTLGQQIEQYQHSYRHAIEGQGKMKRELEGLQKSIDANRRQLQSMESSRSNRLQRFGDQMPALLAAIDEAHKKGQFKHRPRGPLGYLISLKDPELALSIEICLKNLVQAFTCDNYDDERVLKSLMTKVLQHGRRPAIITSRFFPKVHDVSVRAVNHPDYPSVLQALEIEDPVVANCLIDQRAIECILLIKNRTEARRVMQGRNPPQNCTSAFSVEGDQIFTNRSYTADQTRANFLSKDVEEGIRHLKREMETQKVQAAHIQQQIRSTDKNISENQDLLRRTQTEQKTTEVKTMKLQLELTDLKNVEEPQSEDLAELKSAFENAEQEYKQHKQLIDTAAEEADVKKVETKLTPLFTSLSCNILWVHCLFVLLQEELSKTDQEVMKCKHHEKHYEERRNAHLCSIKTLENNVASKEKELQESIAKAKEICPEQLVVRRTARSLDVEITRLKVKIATQREHQGDREEIVREYHEALESYANKAQQIKNLNNFIKCLDRVMDQRLYAYTVLRRFLSARCKYYFDSMLAQRGFTGNMTFDHKNETLSISVQPGQGNKADLNDMRCLSGGERSFSTVCFVLSLWPITEAPFRCLDEFDVYMDMANRRNTQRQSGLKMATSQKIRQLIFLTPQSMSSLPECRRIHIVQLNDPVHGQTQMEQEEEGP</sequence>
<organism>
    <name type="scientific">Takifugu rubripes</name>
    <name type="common">Japanese pufferfish</name>
    <name type="synonym">Fugu rubripes</name>
    <dbReference type="NCBI Taxonomy" id="31033"/>
    <lineage>
        <taxon>Eukaryota</taxon>
        <taxon>Metazoa</taxon>
        <taxon>Chordata</taxon>
        <taxon>Craniata</taxon>
        <taxon>Vertebrata</taxon>
        <taxon>Euteleostomi</taxon>
        <taxon>Actinopterygii</taxon>
        <taxon>Neopterygii</taxon>
        <taxon>Teleostei</taxon>
        <taxon>Neoteleostei</taxon>
        <taxon>Acanthomorphata</taxon>
        <taxon>Eupercaria</taxon>
        <taxon>Tetraodontiformes</taxon>
        <taxon>Tetradontoidea</taxon>
        <taxon>Tetraodontidae</taxon>
        <taxon>Takifugu</taxon>
    </lineage>
</organism>
<protein>
    <recommendedName>
        <fullName>Structural maintenance of chromosomes protein 6</fullName>
        <shortName>SMC protein 6</shortName>
        <shortName>SMC-6</shortName>
    </recommendedName>
</protein>
<evidence type="ECO:0000250" key="1"/>
<evidence type="ECO:0000255" key="2"/>
<evidence type="ECO:0000256" key="3">
    <source>
        <dbReference type="SAM" id="MobiDB-lite"/>
    </source>
</evidence>
<evidence type="ECO:0000305" key="4"/>
<gene>
    <name type="primary">smc6</name>
    <name type="synonym">smc6l1</name>
</gene>
<proteinExistence type="evidence at transcript level"/>
<dbReference type="EMBL" id="AJ543330">
    <property type="protein sequence ID" value="CAD65851.1"/>
    <property type="molecule type" value="mRNA"/>
</dbReference>
<dbReference type="RefSeq" id="NP_001027868.1">
    <property type="nucleotide sequence ID" value="NM_001032696.1"/>
</dbReference>
<dbReference type="SMR" id="Q802R8"/>
<dbReference type="STRING" id="31033.ENSTRUP00000038201"/>
<dbReference type="GeneID" id="446077"/>
<dbReference type="KEGG" id="tru:446077"/>
<dbReference type="CTD" id="79677"/>
<dbReference type="eggNOG" id="KOG0250">
    <property type="taxonomic scope" value="Eukaryota"/>
</dbReference>
<dbReference type="InParanoid" id="Q802R8"/>
<dbReference type="OrthoDB" id="10072614at2759"/>
<dbReference type="Proteomes" id="UP000005226">
    <property type="component" value="Unplaced"/>
</dbReference>
<dbReference type="GO" id="GO:0000781">
    <property type="term" value="C:chromosome, telomeric region"/>
    <property type="evidence" value="ECO:0000250"/>
    <property type="project" value="UniProtKB"/>
</dbReference>
<dbReference type="GO" id="GO:0016605">
    <property type="term" value="C:PML body"/>
    <property type="evidence" value="ECO:0000250"/>
    <property type="project" value="UniProtKB"/>
</dbReference>
<dbReference type="GO" id="GO:0035861">
    <property type="term" value="C:site of double-strand break"/>
    <property type="evidence" value="ECO:0007669"/>
    <property type="project" value="TreeGrafter"/>
</dbReference>
<dbReference type="GO" id="GO:0030915">
    <property type="term" value="C:Smc5-Smc6 complex"/>
    <property type="evidence" value="ECO:0000250"/>
    <property type="project" value="UniProtKB"/>
</dbReference>
<dbReference type="GO" id="GO:0005524">
    <property type="term" value="F:ATP binding"/>
    <property type="evidence" value="ECO:0007669"/>
    <property type="project" value="UniProtKB-KW"/>
</dbReference>
<dbReference type="GO" id="GO:0003684">
    <property type="term" value="F:damaged DNA binding"/>
    <property type="evidence" value="ECO:0007669"/>
    <property type="project" value="TreeGrafter"/>
</dbReference>
<dbReference type="GO" id="GO:0003697">
    <property type="term" value="F:single-stranded DNA binding"/>
    <property type="evidence" value="ECO:0007669"/>
    <property type="project" value="TreeGrafter"/>
</dbReference>
<dbReference type="GO" id="GO:0090398">
    <property type="term" value="P:cellular senescence"/>
    <property type="evidence" value="ECO:0000250"/>
    <property type="project" value="UniProtKB"/>
</dbReference>
<dbReference type="GO" id="GO:0000724">
    <property type="term" value="P:double-strand break repair via homologous recombination"/>
    <property type="evidence" value="ECO:0007669"/>
    <property type="project" value="TreeGrafter"/>
</dbReference>
<dbReference type="GO" id="GO:0000722">
    <property type="term" value="P:telomere maintenance via recombination"/>
    <property type="evidence" value="ECO:0000250"/>
    <property type="project" value="UniProtKB"/>
</dbReference>
<dbReference type="FunFam" id="3.40.50.300:FF:003232">
    <property type="entry name" value="Structural maintenance of chromosomes 6, gene 1"/>
    <property type="match status" value="1"/>
</dbReference>
<dbReference type="FunFam" id="3.40.50.300:FF:000959">
    <property type="entry name" value="structural maintenance of chromosomes protein 6"/>
    <property type="match status" value="1"/>
</dbReference>
<dbReference type="Gene3D" id="1.10.287.1490">
    <property type="match status" value="1"/>
</dbReference>
<dbReference type="Gene3D" id="3.40.50.300">
    <property type="entry name" value="P-loop containing nucleotide triphosphate hydrolases"/>
    <property type="match status" value="2"/>
</dbReference>
<dbReference type="InterPro" id="IPR027417">
    <property type="entry name" value="P-loop_NTPase"/>
</dbReference>
<dbReference type="InterPro" id="IPR003395">
    <property type="entry name" value="RecF/RecN/SMC_N"/>
</dbReference>
<dbReference type="PANTHER" id="PTHR19306:SF7">
    <property type="entry name" value="SI:DKEY-119F1.1"/>
    <property type="match status" value="1"/>
</dbReference>
<dbReference type="PANTHER" id="PTHR19306">
    <property type="entry name" value="STRUCTURAL MAINTENANCE OF CHROMOSOMES 5,6 SMC5, SMC6"/>
    <property type="match status" value="1"/>
</dbReference>
<dbReference type="Pfam" id="PF02463">
    <property type="entry name" value="SMC_N"/>
    <property type="match status" value="1"/>
</dbReference>
<dbReference type="SUPFAM" id="SSF52540">
    <property type="entry name" value="P-loop containing nucleoside triphosphate hydrolases"/>
    <property type="match status" value="1"/>
</dbReference>
<accession>Q802R8</accession>
<name>SMC6_TAKRU</name>
<reference key="1">
    <citation type="journal article" date="2004" name="Mol. Biol. Evol.">
        <title>The evolution of SMC proteins: phylogenetic analysis and structural implications.</title>
        <authorList>
            <person name="Cobbe N."/>
            <person name="Heck M.M.S."/>
        </authorList>
    </citation>
    <scope>NUCLEOTIDE SEQUENCE [MRNA]</scope>
</reference>